<feature type="chain" id="PRO_1000023158" description="Thymidylate kinase">
    <location>
        <begin position="1"/>
        <end position="206"/>
    </location>
</feature>
<feature type="binding site" evidence="1">
    <location>
        <begin position="11"/>
        <end position="18"/>
    </location>
    <ligand>
        <name>ATP</name>
        <dbReference type="ChEBI" id="CHEBI:30616"/>
    </ligand>
</feature>
<evidence type="ECO:0000255" key="1">
    <source>
        <dbReference type="HAMAP-Rule" id="MF_00165"/>
    </source>
</evidence>
<reference key="1">
    <citation type="journal article" date="2010" name="Genome Biol. Evol.">
        <title>Continuing evolution of Burkholderia mallei through genome reduction and large-scale rearrangements.</title>
        <authorList>
            <person name="Losada L."/>
            <person name="Ronning C.M."/>
            <person name="DeShazer D."/>
            <person name="Woods D."/>
            <person name="Fedorova N."/>
            <person name="Kim H.S."/>
            <person name="Shabalina S.A."/>
            <person name="Pearson T.R."/>
            <person name="Brinkac L."/>
            <person name="Tan P."/>
            <person name="Nandi T."/>
            <person name="Crabtree J."/>
            <person name="Badger J."/>
            <person name="Beckstrom-Sternberg S."/>
            <person name="Saqib M."/>
            <person name="Schutzer S.E."/>
            <person name="Keim P."/>
            <person name="Nierman W.C."/>
        </authorList>
    </citation>
    <scope>NUCLEOTIDE SEQUENCE [LARGE SCALE GENOMIC DNA]</scope>
    <source>
        <strain>NCTC 10247</strain>
    </source>
</reference>
<comment type="function">
    <text evidence="1">Phosphorylation of dTMP to form dTDP in both de novo and salvage pathways of dTTP synthesis.</text>
</comment>
<comment type="catalytic activity">
    <reaction evidence="1">
        <text>dTMP + ATP = dTDP + ADP</text>
        <dbReference type="Rhea" id="RHEA:13517"/>
        <dbReference type="ChEBI" id="CHEBI:30616"/>
        <dbReference type="ChEBI" id="CHEBI:58369"/>
        <dbReference type="ChEBI" id="CHEBI:63528"/>
        <dbReference type="ChEBI" id="CHEBI:456216"/>
        <dbReference type="EC" id="2.7.4.9"/>
    </reaction>
</comment>
<comment type="similarity">
    <text evidence="1">Belongs to the thymidylate kinase family.</text>
</comment>
<gene>
    <name evidence="1" type="primary">tmk</name>
    <name type="ordered locus">BMA10247_1189</name>
</gene>
<name>KTHY_BURM7</name>
<dbReference type="EC" id="2.7.4.9" evidence="1"/>
<dbReference type="EMBL" id="CP000548">
    <property type="protein sequence ID" value="ABO04009.1"/>
    <property type="molecule type" value="Genomic_DNA"/>
</dbReference>
<dbReference type="RefSeq" id="WP_004193022.1">
    <property type="nucleotide sequence ID" value="NZ_CP007802.1"/>
</dbReference>
<dbReference type="SMR" id="A3MKF7"/>
<dbReference type="GeneID" id="92979159"/>
<dbReference type="KEGG" id="bmaz:BM44_1916"/>
<dbReference type="KEGG" id="bmn:BMA10247_1189"/>
<dbReference type="PATRIC" id="fig|320389.8.peg.2152"/>
<dbReference type="GO" id="GO:0005829">
    <property type="term" value="C:cytosol"/>
    <property type="evidence" value="ECO:0007669"/>
    <property type="project" value="TreeGrafter"/>
</dbReference>
<dbReference type="GO" id="GO:0005524">
    <property type="term" value="F:ATP binding"/>
    <property type="evidence" value="ECO:0007669"/>
    <property type="project" value="UniProtKB-UniRule"/>
</dbReference>
<dbReference type="GO" id="GO:0004798">
    <property type="term" value="F:dTMP kinase activity"/>
    <property type="evidence" value="ECO:0007669"/>
    <property type="project" value="UniProtKB-UniRule"/>
</dbReference>
<dbReference type="GO" id="GO:0006233">
    <property type="term" value="P:dTDP biosynthetic process"/>
    <property type="evidence" value="ECO:0007669"/>
    <property type="project" value="InterPro"/>
</dbReference>
<dbReference type="GO" id="GO:0006235">
    <property type="term" value="P:dTTP biosynthetic process"/>
    <property type="evidence" value="ECO:0007669"/>
    <property type="project" value="UniProtKB-UniRule"/>
</dbReference>
<dbReference type="GO" id="GO:0006227">
    <property type="term" value="P:dUDP biosynthetic process"/>
    <property type="evidence" value="ECO:0007669"/>
    <property type="project" value="TreeGrafter"/>
</dbReference>
<dbReference type="CDD" id="cd01672">
    <property type="entry name" value="TMPK"/>
    <property type="match status" value="1"/>
</dbReference>
<dbReference type="FunFam" id="3.40.50.300:FF:000225">
    <property type="entry name" value="Thymidylate kinase"/>
    <property type="match status" value="1"/>
</dbReference>
<dbReference type="Gene3D" id="3.40.50.300">
    <property type="entry name" value="P-loop containing nucleotide triphosphate hydrolases"/>
    <property type="match status" value="1"/>
</dbReference>
<dbReference type="HAMAP" id="MF_00165">
    <property type="entry name" value="Thymidylate_kinase"/>
    <property type="match status" value="1"/>
</dbReference>
<dbReference type="InterPro" id="IPR027417">
    <property type="entry name" value="P-loop_NTPase"/>
</dbReference>
<dbReference type="InterPro" id="IPR039430">
    <property type="entry name" value="Thymidylate_kin-like_dom"/>
</dbReference>
<dbReference type="InterPro" id="IPR018094">
    <property type="entry name" value="Thymidylate_kinase"/>
</dbReference>
<dbReference type="NCBIfam" id="TIGR00041">
    <property type="entry name" value="DTMP_kinase"/>
    <property type="match status" value="1"/>
</dbReference>
<dbReference type="PANTHER" id="PTHR10344">
    <property type="entry name" value="THYMIDYLATE KINASE"/>
    <property type="match status" value="1"/>
</dbReference>
<dbReference type="PANTHER" id="PTHR10344:SF4">
    <property type="entry name" value="UMP-CMP KINASE 2, MITOCHONDRIAL"/>
    <property type="match status" value="1"/>
</dbReference>
<dbReference type="Pfam" id="PF02223">
    <property type="entry name" value="Thymidylate_kin"/>
    <property type="match status" value="1"/>
</dbReference>
<dbReference type="SUPFAM" id="SSF52540">
    <property type="entry name" value="P-loop containing nucleoside triphosphate hydrolases"/>
    <property type="match status" value="1"/>
</dbReference>
<protein>
    <recommendedName>
        <fullName evidence="1">Thymidylate kinase</fullName>
        <ecNumber evidence="1">2.7.4.9</ecNumber>
    </recommendedName>
    <alternativeName>
        <fullName evidence="1">dTMP kinase</fullName>
    </alternativeName>
</protein>
<accession>A3MKF7</accession>
<sequence length="206" mass="23100">MARGKFITFEGIDGAGKTTHLQWFCDRLQERLGPTGRHVVVTREPGGTQLGETLREILLNQPMDLETEALLMFAGRREHLALVIEPALARGDWVVSDRFTDATFAYQGGGRGLPRDKLEALERWVQGGFQPDLTVLFDVQPQVASARRGAVRMPDKFESESDAFFARTRAEYLRRAHEAPHRFAIVDSSESIPQIRKQLEGVLAAL</sequence>
<proteinExistence type="inferred from homology"/>
<keyword id="KW-0067">ATP-binding</keyword>
<keyword id="KW-0418">Kinase</keyword>
<keyword id="KW-0545">Nucleotide biosynthesis</keyword>
<keyword id="KW-0547">Nucleotide-binding</keyword>
<keyword id="KW-0808">Transferase</keyword>
<organism>
    <name type="scientific">Burkholderia mallei (strain NCTC 10247)</name>
    <dbReference type="NCBI Taxonomy" id="320389"/>
    <lineage>
        <taxon>Bacteria</taxon>
        <taxon>Pseudomonadati</taxon>
        <taxon>Pseudomonadota</taxon>
        <taxon>Betaproteobacteria</taxon>
        <taxon>Burkholderiales</taxon>
        <taxon>Burkholderiaceae</taxon>
        <taxon>Burkholderia</taxon>
        <taxon>pseudomallei group</taxon>
    </lineage>
</organism>